<gene>
    <name evidence="1" type="primary">glnD</name>
    <name type="ordered locus">VP2320</name>
</gene>
<proteinExistence type="inferred from homology"/>
<protein>
    <recommendedName>
        <fullName evidence="1">Bifunctional uridylyltransferase/uridylyl-removing enzyme</fullName>
        <shortName evidence="1">UTase/UR</shortName>
    </recommendedName>
    <alternativeName>
        <fullName evidence="1">Bifunctional [protein-PII] modification enzyme</fullName>
    </alternativeName>
    <alternativeName>
        <fullName evidence="1">Bifunctional nitrogen sensor protein</fullName>
    </alternativeName>
    <domain>
        <recommendedName>
            <fullName evidence="1">[Protein-PII] uridylyltransferase</fullName>
            <shortName evidence="1">PII uridylyltransferase</shortName>
            <shortName evidence="1">UTase</shortName>
            <ecNumber evidence="1">2.7.7.59</ecNumber>
        </recommendedName>
    </domain>
    <domain>
        <recommendedName>
            <fullName evidence="1">[Protein-PII]-UMP uridylyl-removing enzyme</fullName>
            <shortName evidence="1">UR</shortName>
            <ecNumber evidence="1">3.1.4.-</ecNumber>
        </recommendedName>
    </domain>
</protein>
<reference key="1">
    <citation type="journal article" date="2003" name="Lancet">
        <title>Genome sequence of Vibrio parahaemolyticus: a pathogenic mechanism distinct from that of V. cholerae.</title>
        <authorList>
            <person name="Makino K."/>
            <person name="Oshima K."/>
            <person name="Kurokawa K."/>
            <person name="Yokoyama K."/>
            <person name="Uda T."/>
            <person name="Tagomori K."/>
            <person name="Iijima Y."/>
            <person name="Najima M."/>
            <person name="Nakano M."/>
            <person name="Yamashita A."/>
            <person name="Kubota Y."/>
            <person name="Kimura S."/>
            <person name="Yasunaga T."/>
            <person name="Honda T."/>
            <person name="Shinagawa H."/>
            <person name="Hattori M."/>
            <person name="Iida T."/>
        </authorList>
    </citation>
    <scope>NUCLEOTIDE SEQUENCE [LARGE SCALE GENOMIC DNA]</scope>
    <source>
        <strain>RIMD 2210633</strain>
    </source>
</reference>
<sequence length="874" mass="100247">MPLQSPLTFSDEQINIGELKQELEKFSSTQKQEFLNHHPVTSLVLARAEYMDLLLTRLWQYFGFNDIYNISLVAVGGYGRGELHPLSDIDILVLSNNKLPTALEAKISEFITLLWDLKLEVGHAVRTVNECAQIGRDDLTVATNLQEARLLCGSEDTFQALKKVVLSDSFWPSETFYRAKIQEQRERHARYHDTTYNLEPDIKSTPGGLRDIHTLSWVARRHFGATSLLEMSRYGFLTDAEYRELVECQDFLWRVRFALHIELRRYDNRLTFAHQAQVAENLGYVGEGNRGVEMMMKEFYRTLRRVAELNKMLLKLFDQAIINGGATENAEILDADFQRRGSLIEARKPALFQARPETILDMFLHIANDSTIEGVSPPTLRQLRTARRRLNKFLHTIPAAREKFLALCRHPNALHKAFSLMHRLGVMAAYLPQWSQIVGQMQFDLFHAYTVDEHSIRLLKHINTFNNPDNHAKHPICCDIYPRMQKKELLIIAAIFHDIGKGRGGDHSVIGEGEAYDFCIEHGLSKPEAKLVGWLVRHHLLMSVTAQRRDIYDPDVITEFAKQVRDEESLEYLVCLTVADICATNPELWNAWKRTLLAELFYSTQRALRRGLENPVDVRERIRHNQQMASALLRKEGFSARQIEVLWQRFKADYFLRHTHTQIAWHCAHLLRMDDPNKPLVLISKKATRGGTEVFVYTKDQPALFATVVAELDRRNFNVHDAQIMTSKDGHVIDTFMVLDQHGEAIDESRHAAVIKHLTHVLEAGRPTKIKTRRTPNKLQHFNVKTKVDFLPTKGKKHTLMEFVALDTPGLLAKVGRTFADLNINLHGAKITTIGERAEDLFILTSEAGGRLSEEQQNELRDKLIEKLSDAVTA</sequence>
<comment type="function">
    <text evidence="1">Modifies, by uridylylation and deuridylylation, the PII regulatory proteins (GlnB and homologs), in response to the nitrogen status of the cell that GlnD senses through the glutamine level. Under low glutamine levels, catalyzes the conversion of the PII proteins and UTP to PII-UMP and PPi, while under higher glutamine levels, GlnD hydrolyzes PII-UMP to PII and UMP (deuridylylation). Thus, controls uridylylation state and activity of the PII proteins, and plays an important role in the regulation of nitrogen assimilation and metabolism.</text>
</comment>
<comment type="catalytic activity">
    <reaction evidence="1">
        <text>[protein-PII]-L-tyrosine + UTP = [protein-PII]-uridylyl-L-tyrosine + diphosphate</text>
        <dbReference type="Rhea" id="RHEA:13673"/>
        <dbReference type="Rhea" id="RHEA-COMP:12147"/>
        <dbReference type="Rhea" id="RHEA-COMP:12148"/>
        <dbReference type="ChEBI" id="CHEBI:33019"/>
        <dbReference type="ChEBI" id="CHEBI:46398"/>
        <dbReference type="ChEBI" id="CHEBI:46858"/>
        <dbReference type="ChEBI" id="CHEBI:90602"/>
        <dbReference type="EC" id="2.7.7.59"/>
    </reaction>
</comment>
<comment type="catalytic activity">
    <reaction evidence="1">
        <text>[protein-PII]-uridylyl-L-tyrosine + H2O = [protein-PII]-L-tyrosine + UMP + H(+)</text>
        <dbReference type="Rhea" id="RHEA:48600"/>
        <dbReference type="Rhea" id="RHEA-COMP:12147"/>
        <dbReference type="Rhea" id="RHEA-COMP:12148"/>
        <dbReference type="ChEBI" id="CHEBI:15377"/>
        <dbReference type="ChEBI" id="CHEBI:15378"/>
        <dbReference type="ChEBI" id="CHEBI:46858"/>
        <dbReference type="ChEBI" id="CHEBI:57865"/>
        <dbReference type="ChEBI" id="CHEBI:90602"/>
    </reaction>
</comment>
<comment type="cofactor">
    <cofactor evidence="1">
        <name>Mg(2+)</name>
        <dbReference type="ChEBI" id="CHEBI:18420"/>
    </cofactor>
</comment>
<comment type="activity regulation">
    <text evidence="1">Uridylyltransferase (UTase) activity is inhibited by glutamine, while glutamine activates uridylyl-removing (UR) activity.</text>
</comment>
<comment type="domain">
    <text evidence="1">Has four distinct domains: an N-terminal nucleotidyltransferase (NT) domain responsible for UTase activity, a central HD domain that encodes UR activity, and two C-terminal ACT domains that seem to have a role in glutamine sensing.</text>
</comment>
<comment type="similarity">
    <text evidence="1">Belongs to the GlnD family.</text>
</comment>
<feature type="chain" id="PRO_0000192773" description="Bifunctional uridylyltransferase/uridylyl-removing enzyme">
    <location>
        <begin position="1"/>
        <end position="874"/>
    </location>
</feature>
<feature type="domain" description="HD" evidence="2">
    <location>
        <begin position="451"/>
        <end position="573"/>
    </location>
</feature>
<feature type="domain" description="ACT 1" evidence="1">
    <location>
        <begin position="693"/>
        <end position="777"/>
    </location>
</feature>
<feature type="domain" description="ACT 2" evidence="1">
    <location>
        <begin position="800"/>
        <end position="874"/>
    </location>
</feature>
<feature type="region of interest" description="Uridylyltransferase">
    <location>
        <begin position="1"/>
        <end position="332"/>
    </location>
</feature>
<feature type="region of interest" description="Uridylyl-removing">
    <location>
        <begin position="333"/>
        <end position="692"/>
    </location>
</feature>
<evidence type="ECO:0000255" key="1">
    <source>
        <dbReference type="HAMAP-Rule" id="MF_00277"/>
    </source>
</evidence>
<evidence type="ECO:0000255" key="2">
    <source>
        <dbReference type="PROSITE-ProRule" id="PRU01175"/>
    </source>
</evidence>
<name>GLND_VIBPA</name>
<accession>Q87MD6</accession>
<keyword id="KW-0378">Hydrolase</keyword>
<keyword id="KW-0460">Magnesium</keyword>
<keyword id="KW-0511">Multifunctional enzyme</keyword>
<keyword id="KW-0548">Nucleotidyltransferase</keyword>
<keyword id="KW-0677">Repeat</keyword>
<keyword id="KW-0808">Transferase</keyword>
<dbReference type="EC" id="2.7.7.59" evidence="1"/>
<dbReference type="EC" id="3.1.4.-" evidence="1"/>
<dbReference type="EMBL" id="BA000031">
    <property type="protein sequence ID" value="BAC60583.1"/>
    <property type="molecule type" value="Genomic_DNA"/>
</dbReference>
<dbReference type="RefSeq" id="NP_798699.1">
    <property type="nucleotide sequence ID" value="NC_004603.1"/>
</dbReference>
<dbReference type="RefSeq" id="WP_005479040.1">
    <property type="nucleotide sequence ID" value="NC_004603.1"/>
</dbReference>
<dbReference type="SMR" id="Q87MD6"/>
<dbReference type="GeneID" id="1189833"/>
<dbReference type="KEGG" id="vpa:VP2320"/>
<dbReference type="PATRIC" id="fig|223926.6.peg.2222"/>
<dbReference type="eggNOG" id="COG2844">
    <property type="taxonomic scope" value="Bacteria"/>
</dbReference>
<dbReference type="HOGENOM" id="CLU_012833_0_0_6"/>
<dbReference type="Proteomes" id="UP000002493">
    <property type="component" value="Chromosome 1"/>
</dbReference>
<dbReference type="GO" id="GO:0008773">
    <property type="term" value="F:[protein-PII] uridylyltransferase activity"/>
    <property type="evidence" value="ECO:0007669"/>
    <property type="project" value="UniProtKB-UniRule"/>
</dbReference>
<dbReference type="GO" id="GO:0008081">
    <property type="term" value="F:phosphoric diester hydrolase activity"/>
    <property type="evidence" value="ECO:0007669"/>
    <property type="project" value="UniProtKB-UniRule"/>
</dbReference>
<dbReference type="GO" id="GO:0006808">
    <property type="term" value="P:regulation of nitrogen utilization"/>
    <property type="evidence" value="ECO:0007669"/>
    <property type="project" value="UniProtKB-UniRule"/>
</dbReference>
<dbReference type="CDD" id="cd04899">
    <property type="entry name" value="ACT_ACR-UUR-like_2"/>
    <property type="match status" value="1"/>
</dbReference>
<dbReference type="CDD" id="cd04900">
    <property type="entry name" value="ACT_UUR-like_1"/>
    <property type="match status" value="1"/>
</dbReference>
<dbReference type="CDD" id="cd00077">
    <property type="entry name" value="HDc"/>
    <property type="match status" value="1"/>
</dbReference>
<dbReference type="CDD" id="cd05401">
    <property type="entry name" value="NT_GlnE_GlnD_like"/>
    <property type="match status" value="1"/>
</dbReference>
<dbReference type="Gene3D" id="3.30.460.10">
    <property type="entry name" value="Beta Polymerase, domain 2"/>
    <property type="match status" value="1"/>
</dbReference>
<dbReference type="Gene3D" id="1.10.3210.10">
    <property type="entry name" value="Hypothetical protein af1432"/>
    <property type="match status" value="1"/>
</dbReference>
<dbReference type="HAMAP" id="MF_00277">
    <property type="entry name" value="PII_uridylyl_transf"/>
    <property type="match status" value="1"/>
</dbReference>
<dbReference type="InterPro" id="IPR045865">
    <property type="entry name" value="ACT-like_dom_sf"/>
</dbReference>
<dbReference type="InterPro" id="IPR002912">
    <property type="entry name" value="ACT_dom"/>
</dbReference>
<dbReference type="InterPro" id="IPR003607">
    <property type="entry name" value="HD/PDEase_dom"/>
</dbReference>
<dbReference type="InterPro" id="IPR006674">
    <property type="entry name" value="HD_domain"/>
</dbReference>
<dbReference type="InterPro" id="IPR043519">
    <property type="entry name" value="NT_sf"/>
</dbReference>
<dbReference type="InterPro" id="IPR013546">
    <property type="entry name" value="PII_UdlTrfase/GS_AdlTrfase"/>
</dbReference>
<dbReference type="InterPro" id="IPR002934">
    <property type="entry name" value="Polymerase_NTP_transf_dom"/>
</dbReference>
<dbReference type="InterPro" id="IPR010043">
    <property type="entry name" value="UTase/UR"/>
</dbReference>
<dbReference type="NCBIfam" id="NF002487">
    <property type="entry name" value="PRK01759.1"/>
    <property type="match status" value="1"/>
</dbReference>
<dbReference type="NCBIfam" id="NF003448">
    <property type="entry name" value="PRK05007.1"/>
    <property type="match status" value="1"/>
</dbReference>
<dbReference type="NCBIfam" id="TIGR01693">
    <property type="entry name" value="UTase_glnD"/>
    <property type="match status" value="1"/>
</dbReference>
<dbReference type="PANTHER" id="PTHR47320">
    <property type="entry name" value="BIFUNCTIONAL URIDYLYLTRANSFERASE/URIDYLYL-REMOVING ENZYME"/>
    <property type="match status" value="1"/>
</dbReference>
<dbReference type="PANTHER" id="PTHR47320:SF1">
    <property type="entry name" value="BIFUNCTIONAL URIDYLYLTRANSFERASE_URIDYLYL-REMOVING ENZYME"/>
    <property type="match status" value="1"/>
</dbReference>
<dbReference type="Pfam" id="PF01842">
    <property type="entry name" value="ACT"/>
    <property type="match status" value="1"/>
</dbReference>
<dbReference type="Pfam" id="PF08335">
    <property type="entry name" value="GlnD_UR_UTase"/>
    <property type="match status" value="1"/>
</dbReference>
<dbReference type="Pfam" id="PF01966">
    <property type="entry name" value="HD"/>
    <property type="match status" value="1"/>
</dbReference>
<dbReference type="Pfam" id="PF01909">
    <property type="entry name" value="NTP_transf_2"/>
    <property type="match status" value="1"/>
</dbReference>
<dbReference type="PIRSF" id="PIRSF006288">
    <property type="entry name" value="PII_uridyltransf"/>
    <property type="match status" value="1"/>
</dbReference>
<dbReference type="SMART" id="SM00471">
    <property type="entry name" value="HDc"/>
    <property type="match status" value="1"/>
</dbReference>
<dbReference type="SUPFAM" id="SSF55021">
    <property type="entry name" value="ACT-like"/>
    <property type="match status" value="2"/>
</dbReference>
<dbReference type="SUPFAM" id="SSF109604">
    <property type="entry name" value="HD-domain/PDEase-like"/>
    <property type="match status" value="1"/>
</dbReference>
<dbReference type="SUPFAM" id="SSF81301">
    <property type="entry name" value="Nucleotidyltransferase"/>
    <property type="match status" value="1"/>
</dbReference>
<dbReference type="SUPFAM" id="SSF81593">
    <property type="entry name" value="Nucleotidyltransferase substrate binding subunit/domain"/>
    <property type="match status" value="1"/>
</dbReference>
<dbReference type="PROSITE" id="PS51671">
    <property type="entry name" value="ACT"/>
    <property type="match status" value="2"/>
</dbReference>
<dbReference type="PROSITE" id="PS51831">
    <property type="entry name" value="HD"/>
    <property type="match status" value="1"/>
</dbReference>
<organism>
    <name type="scientific">Vibrio parahaemolyticus serotype O3:K6 (strain RIMD 2210633)</name>
    <dbReference type="NCBI Taxonomy" id="223926"/>
    <lineage>
        <taxon>Bacteria</taxon>
        <taxon>Pseudomonadati</taxon>
        <taxon>Pseudomonadota</taxon>
        <taxon>Gammaproteobacteria</taxon>
        <taxon>Vibrionales</taxon>
        <taxon>Vibrionaceae</taxon>
        <taxon>Vibrio</taxon>
    </lineage>
</organism>